<feature type="chain" id="PRO_0000124988" description="Large ribosomal subunit protein uL5">
    <location>
        <begin position="1"/>
        <end position="179"/>
    </location>
</feature>
<evidence type="ECO:0000255" key="1">
    <source>
        <dbReference type="HAMAP-Rule" id="MF_01333"/>
    </source>
</evidence>
<evidence type="ECO:0000305" key="2"/>
<comment type="function">
    <text evidence="1">This is one of the proteins that bind and probably mediate the attachment of the 5S RNA into the large ribosomal subunit, where it forms part of the central protuberance. In the 70S ribosome it contacts protein S13 of the 30S subunit (bridge B1b), connecting the 2 subunits; this bridge is implicated in subunit movement. Contacts the P site tRNA; the 5S rRNA and some of its associated proteins might help stabilize positioning of ribosome-bound tRNAs.</text>
</comment>
<comment type="subunit">
    <text evidence="1">Part of the 50S ribosomal subunit; part of the 5S rRNA/L5/L18/L25 subcomplex. Contacts the 5S rRNA and the P site tRNA. Forms a bridge to the 30S subunit in the 70S ribosome.</text>
</comment>
<comment type="similarity">
    <text evidence="1">Belongs to the universal ribosomal protein uL5 family.</text>
</comment>
<gene>
    <name evidence="1" type="primary">rplE</name>
    <name type="ordered locus">SA2035</name>
</gene>
<name>RL5_STAAN</name>
<reference key="1">
    <citation type="journal article" date="2001" name="Lancet">
        <title>Whole genome sequencing of meticillin-resistant Staphylococcus aureus.</title>
        <authorList>
            <person name="Kuroda M."/>
            <person name="Ohta T."/>
            <person name="Uchiyama I."/>
            <person name="Baba T."/>
            <person name="Yuzawa H."/>
            <person name="Kobayashi I."/>
            <person name="Cui L."/>
            <person name="Oguchi A."/>
            <person name="Aoki K."/>
            <person name="Nagai Y."/>
            <person name="Lian J.-Q."/>
            <person name="Ito T."/>
            <person name="Kanamori M."/>
            <person name="Matsumaru H."/>
            <person name="Maruyama A."/>
            <person name="Murakami H."/>
            <person name="Hosoyama A."/>
            <person name="Mizutani-Ui Y."/>
            <person name="Takahashi N.K."/>
            <person name="Sawano T."/>
            <person name="Inoue R."/>
            <person name="Kaito C."/>
            <person name="Sekimizu K."/>
            <person name="Hirakawa H."/>
            <person name="Kuhara S."/>
            <person name="Goto S."/>
            <person name="Yabuzaki J."/>
            <person name="Kanehisa M."/>
            <person name="Yamashita A."/>
            <person name="Oshima K."/>
            <person name="Furuya K."/>
            <person name="Yoshino C."/>
            <person name="Shiba T."/>
            <person name="Hattori M."/>
            <person name="Ogasawara N."/>
            <person name="Hayashi H."/>
            <person name="Hiramatsu K."/>
        </authorList>
    </citation>
    <scope>NUCLEOTIDE SEQUENCE [LARGE SCALE GENOMIC DNA]</scope>
    <source>
        <strain>N315</strain>
    </source>
</reference>
<reference key="2">
    <citation type="submission" date="2007-10" db="UniProtKB">
        <title>Shotgun proteomic analysis of total and membrane protein extracts of S. aureus strain N315.</title>
        <authorList>
            <person name="Vaezzadeh A.R."/>
            <person name="Deshusses J."/>
            <person name="Lescuyer P."/>
            <person name="Hochstrasser D.F."/>
        </authorList>
    </citation>
    <scope>IDENTIFICATION BY MASS SPECTROMETRY [LARGE SCALE ANALYSIS]</scope>
    <source>
        <strain>N315</strain>
    </source>
</reference>
<organism>
    <name type="scientific">Staphylococcus aureus (strain N315)</name>
    <dbReference type="NCBI Taxonomy" id="158879"/>
    <lineage>
        <taxon>Bacteria</taxon>
        <taxon>Bacillati</taxon>
        <taxon>Bacillota</taxon>
        <taxon>Bacilli</taxon>
        <taxon>Bacillales</taxon>
        <taxon>Staphylococcaceae</taxon>
        <taxon>Staphylococcus</taxon>
    </lineage>
</organism>
<keyword id="KW-0687">Ribonucleoprotein</keyword>
<keyword id="KW-0689">Ribosomal protein</keyword>
<keyword id="KW-0694">RNA-binding</keyword>
<keyword id="KW-0699">rRNA-binding</keyword>
<keyword id="KW-0820">tRNA-binding</keyword>
<sequence length="179" mass="20267">MNRLKEKFNTEVTENLMKKFNYSSVMEVPKIDKIVVNMGVGDAVQNSKVLDNAVEELELITGQKPLVTKAKKSIATFRLREGMPIGAKVTLRGERMYEFLDKLISVSLPRVRDFQGVSKKAFDGRGNYTLGVKEQLIFPEIDYDKVSKVRGMDIVIVTTANTDEEARELLANFGMPFRK</sequence>
<dbReference type="EMBL" id="BA000018">
    <property type="protein sequence ID" value="BAB43330.1"/>
    <property type="molecule type" value="Genomic_DNA"/>
</dbReference>
<dbReference type="PIR" id="A90021">
    <property type="entry name" value="A90021"/>
</dbReference>
<dbReference type="RefSeq" id="WP_001080824.1">
    <property type="nucleotide sequence ID" value="NC_002745.2"/>
</dbReference>
<dbReference type="SMR" id="Q7A465"/>
<dbReference type="EnsemblBacteria" id="BAB43330">
    <property type="protein sequence ID" value="BAB43330"/>
    <property type="gene ID" value="BAB43330"/>
</dbReference>
<dbReference type="KEGG" id="sau:SA2035"/>
<dbReference type="HOGENOM" id="CLU_061015_2_1_9"/>
<dbReference type="GO" id="GO:1990904">
    <property type="term" value="C:ribonucleoprotein complex"/>
    <property type="evidence" value="ECO:0007669"/>
    <property type="project" value="UniProtKB-KW"/>
</dbReference>
<dbReference type="GO" id="GO:0005840">
    <property type="term" value="C:ribosome"/>
    <property type="evidence" value="ECO:0007669"/>
    <property type="project" value="UniProtKB-KW"/>
</dbReference>
<dbReference type="GO" id="GO:0019843">
    <property type="term" value="F:rRNA binding"/>
    <property type="evidence" value="ECO:0007669"/>
    <property type="project" value="UniProtKB-UniRule"/>
</dbReference>
<dbReference type="GO" id="GO:0003735">
    <property type="term" value="F:structural constituent of ribosome"/>
    <property type="evidence" value="ECO:0007669"/>
    <property type="project" value="InterPro"/>
</dbReference>
<dbReference type="GO" id="GO:0000049">
    <property type="term" value="F:tRNA binding"/>
    <property type="evidence" value="ECO:0007669"/>
    <property type="project" value="UniProtKB-UniRule"/>
</dbReference>
<dbReference type="GO" id="GO:0006412">
    <property type="term" value="P:translation"/>
    <property type="evidence" value="ECO:0007669"/>
    <property type="project" value="UniProtKB-UniRule"/>
</dbReference>
<dbReference type="FunFam" id="3.30.1440.10:FF:000001">
    <property type="entry name" value="50S ribosomal protein L5"/>
    <property type="match status" value="1"/>
</dbReference>
<dbReference type="Gene3D" id="3.30.1440.10">
    <property type="match status" value="1"/>
</dbReference>
<dbReference type="HAMAP" id="MF_01333_B">
    <property type="entry name" value="Ribosomal_uL5_B"/>
    <property type="match status" value="1"/>
</dbReference>
<dbReference type="InterPro" id="IPR002132">
    <property type="entry name" value="Ribosomal_uL5"/>
</dbReference>
<dbReference type="InterPro" id="IPR020930">
    <property type="entry name" value="Ribosomal_uL5_bac-type"/>
</dbReference>
<dbReference type="InterPro" id="IPR031309">
    <property type="entry name" value="Ribosomal_uL5_C"/>
</dbReference>
<dbReference type="InterPro" id="IPR020929">
    <property type="entry name" value="Ribosomal_uL5_CS"/>
</dbReference>
<dbReference type="InterPro" id="IPR022803">
    <property type="entry name" value="Ribosomal_uL5_dom_sf"/>
</dbReference>
<dbReference type="InterPro" id="IPR031310">
    <property type="entry name" value="Ribosomal_uL5_N"/>
</dbReference>
<dbReference type="NCBIfam" id="NF000585">
    <property type="entry name" value="PRK00010.1"/>
    <property type="match status" value="1"/>
</dbReference>
<dbReference type="PANTHER" id="PTHR11994">
    <property type="entry name" value="60S RIBOSOMAL PROTEIN L11-RELATED"/>
    <property type="match status" value="1"/>
</dbReference>
<dbReference type="Pfam" id="PF00281">
    <property type="entry name" value="Ribosomal_L5"/>
    <property type="match status" value="1"/>
</dbReference>
<dbReference type="Pfam" id="PF00673">
    <property type="entry name" value="Ribosomal_L5_C"/>
    <property type="match status" value="1"/>
</dbReference>
<dbReference type="PIRSF" id="PIRSF002161">
    <property type="entry name" value="Ribosomal_L5"/>
    <property type="match status" value="1"/>
</dbReference>
<dbReference type="SUPFAM" id="SSF55282">
    <property type="entry name" value="RL5-like"/>
    <property type="match status" value="1"/>
</dbReference>
<dbReference type="PROSITE" id="PS00358">
    <property type="entry name" value="RIBOSOMAL_L5"/>
    <property type="match status" value="1"/>
</dbReference>
<protein>
    <recommendedName>
        <fullName evidence="1">Large ribosomal subunit protein uL5</fullName>
    </recommendedName>
    <alternativeName>
        <fullName evidence="2">50S ribosomal protein L5</fullName>
    </alternativeName>
</protein>
<proteinExistence type="evidence at protein level"/>
<accession>Q7A465</accession>